<organism>
    <name type="scientific">Aquifex aeolicus (strain VF5)</name>
    <dbReference type="NCBI Taxonomy" id="224324"/>
    <lineage>
        <taxon>Bacteria</taxon>
        <taxon>Pseudomonadati</taxon>
        <taxon>Aquificota</taxon>
        <taxon>Aquificia</taxon>
        <taxon>Aquificales</taxon>
        <taxon>Aquificaceae</taxon>
        <taxon>Aquifex</taxon>
    </lineage>
</organism>
<dbReference type="EC" id="4.1.2.50"/>
<dbReference type="EMBL" id="AE000657">
    <property type="protein sequence ID" value="AAC06591.1"/>
    <property type="molecule type" value="Genomic_DNA"/>
</dbReference>
<dbReference type="PIR" id="F70324">
    <property type="entry name" value="F70324"/>
</dbReference>
<dbReference type="RefSeq" id="NP_213186.1">
    <property type="nucleotide sequence ID" value="NC_000918.1"/>
</dbReference>
<dbReference type="RefSeq" id="WP_010880124.1">
    <property type="nucleotide sequence ID" value="NC_000918.1"/>
</dbReference>
<dbReference type="SMR" id="O66626"/>
<dbReference type="FunCoup" id="O66626">
    <property type="interactions" value="182"/>
</dbReference>
<dbReference type="STRING" id="224324.aq_269"/>
<dbReference type="EnsemblBacteria" id="AAC06591">
    <property type="protein sequence ID" value="AAC06591"/>
    <property type="gene ID" value="aq_269"/>
</dbReference>
<dbReference type="KEGG" id="aae:aq_269"/>
<dbReference type="eggNOG" id="COG0720">
    <property type="taxonomic scope" value="Bacteria"/>
</dbReference>
<dbReference type="HOGENOM" id="CLU_111016_1_2_0"/>
<dbReference type="InParanoid" id="O66626"/>
<dbReference type="OrthoDB" id="9804698at2"/>
<dbReference type="UniPathway" id="UPA00391"/>
<dbReference type="Proteomes" id="UP000000798">
    <property type="component" value="Chromosome"/>
</dbReference>
<dbReference type="GO" id="GO:0070497">
    <property type="term" value="F:6-carboxytetrahydropterin synthase activity"/>
    <property type="evidence" value="ECO:0007669"/>
    <property type="project" value="UniProtKB-EC"/>
</dbReference>
<dbReference type="GO" id="GO:0046872">
    <property type="term" value="F:metal ion binding"/>
    <property type="evidence" value="ECO:0007669"/>
    <property type="project" value="UniProtKB-KW"/>
</dbReference>
<dbReference type="GO" id="GO:0008616">
    <property type="term" value="P:queuosine biosynthetic process"/>
    <property type="evidence" value="ECO:0007669"/>
    <property type="project" value="UniProtKB-KW"/>
</dbReference>
<dbReference type="FunFam" id="3.30.479.10:FF:000011">
    <property type="entry name" value="6-carboxy-5,6,7,8-tetrahydropterin synthase"/>
    <property type="match status" value="1"/>
</dbReference>
<dbReference type="Gene3D" id="3.30.479.10">
    <property type="entry name" value="6-pyruvoyl tetrahydropterin synthase/QueD"/>
    <property type="match status" value="1"/>
</dbReference>
<dbReference type="InterPro" id="IPR007115">
    <property type="entry name" value="6-PTP_synth/QueD"/>
</dbReference>
<dbReference type="InterPro" id="IPR038418">
    <property type="entry name" value="6-PTP_synth/QueD_sf"/>
</dbReference>
<dbReference type="PANTHER" id="PTHR12589:SF7">
    <property type="entry name" value="6-PYRUVOYL TETRAHYDROBIOPTERIN SYNTHASE"/>
    <property type="match status" value="1"/>
</dbReference>
<dbReference type="PANTHER" id="PTHR12589">
    <property type="entry name" value="PYRUVOYL TETRAHYDROBIOPTERIN SYNTHASE"/>
    <property type="match status" value="1"/>
</dbReference>
<dbReference type="Pfam" id="PF01242">
    <property type="entry name" value="PTPS"/>
    <property type="match status" value="1"/>
</dbReference>
<dbReference type="SUPFAM" id="SSF55620">
    <property type="entry name" value="Tetrahydrobiopterin biosynthesis enzymes-like"/>
    <property type="match status" value="1"/>
</dbReference>
<comment type="function">
    <text evidence="1">Catalyzes the conversion of 7,8-dihydroneopterin triphosphate (H2NTP) to 6-carboxy-5,6,7,8-tetrahydropterin (CPH4) and acetaldehyde.</text>
</comment>
<comment type="catalytic activity">
    <reaction>
        <text>7,8-dihydroneopterin 3'-triphosphate + H2O = 6-carboxy-5,6,7,8-tetrahydropterin + triphosphate + acetaldehyde + 2 H(+)</text>
        <dbReference type="Rhea" id="RHEA:27966"/>
        <dbReference type="ChEBI" id="CHEBI:15343"/>
        <dbReference type="ChEBI" id="CHEBI:15377"/>
        <dbReference type="ChEBI" id="CHEBI:15378"/>
        <dbReference type="ChEBI" id="CHEBI:18036"/>
        <dbReference type="ChEBI" id="CHEBI:58462"/>
        <dbReference type="ChEBI" id="CHEBI:61032"/>
        <dbReference type="EC" id="4.1.2.50"/>
    </reaction>
</comment>
<comment type="cofactor">
    <cofactor evidence="1">
        <name>Zn(2+)</name>
        <dbReference type="ChEBI" id="CHEBI:29105"/>
    </cofactor>
    <text evidence="1">Binds 1 zinc ion per subunit.</text>
</comment>
<comment type="pathway">
    <text>Purine metabolism; 7-cyano-7-deazaguanine biosynthesis.</text>
</comment>
<comment type="miscellaneous">
    <text evidence="1">The active site is at the interface between 2 subunits. The proton acceptor Cys is on one subunit, and the charge relay system is on the other subunit (By similarity).</text>
</comment>
<comment type="similarity">
    <text evidence="2">Belongs to the PTPS family. QueD subfamily.</text>
</comment>
<proteinExistence type="inferred from homology"/>
<sequence>MKWEISKTFRFEAGHRVWKQNLTYGRGAQFTKEKPVNKCVNLHGHSYVLEVTVGSDTLSEQDMVMDFYHVKNALKGLIEEIDHSFIIDVNDPMYPELKDVAEKYGAMKIFPVEFCPTAEALAKFFYDFLKKRLEEAGLLGEVKVVKVVLWETATSKAEYKEE</sequence>
<feature type="chain" id="PRO_0000057920" description="6-carboxy-5,6,7,8-tetrahydropterin synthase">
    <location>
        <begin position="1"/>
        <end position="162"/>
    </location>
</feature>
<feature type="active site" description="Proton acceptor" evidence="1">
    <location>
        <position position="39"/>
    </location>
</feature>
<feature type="active site" description="Charge relay system" evidence="1">
    <location>
        <position position="83"/>
    </location>
</feature>
<feature type="active site" description="Charge relay system" evidence="1">
    <location>
        <position position="151"/>
    </location>
</feature>
<feature type="binding site" evidence="1">
    <location>
        <position position="15"/>
    </location>
    <ligand>
        <name>Zn(2+)</name>
        <dbReference type="ChEBI" id="CHEBI:29105"/>
    </ligand>
</feature>
<feature type="binding site" evidence="1">
    <location>
        <position position="43"/>
    </location>
    <ligand>
        <name>Zn(2+)</name>
        <dbReference type="ChEBI" id="CHEBI:29105"/>
    </ligand>
</feature>
<feature type="binding site" evidence="1">
    <location>
        <position position="45"/>
    </location>
    <ligand>
        <name>Zn(2+)</name>
        <dbReference type="ChEBI" id="CHEBI:29105"/>
    </ligand>
</feature>
<gene>
    <name type="primary">queD</name>
    <name type="ordered locus">aq_269</name>
</gene>
<accession>O66626</accession>
<reference key="1">
    <citation type="journal article" date="1998" name="Nature">
        <title>The complete genome of the hyperthermophilic bacterium Aquifex aeolicus.</title>
        <authorList>
            <person name="Deckert G."/>
            <person name="Warren P.V."/>
            <person name="Gaasterland T."/>
            <person name="Young W.G."/>
            <person name="Lenox A.L."/>
            <person name="Graham D.E."/>
            <person name="Overbeek R."/>
            <person name="Snead M.A."/>
            <person name="Keller M."/>
            <person name="Aujay M."/>
            <person name="Huber R."/>
            <person name="Feldman R.A."/>
            <person name="Short J.M."/>
            <person name="Olsen G.J."/>
            <person name="Swanson R.V."/>
        </authorList>
    </citation>
    <scope>NUCLEOTIDE SEQUENCE [LARGE SCALE GENOMIC DNA]</scope>
    <source>
        <strain>VF5</strain>
    </source>
</reference>
<protein>
    <recommendedName>
        <fullName>6-carboxy-5,6,7,8-tetrahydropterin synthase</fullName>
        <shortName>CPH4 synthase</shortName>
        <ecNumber>4.1.2.50</ecNumber>
    </recommendedName>
    <alternativeName>
        <fullName>Queuosine biosynthesis protein QueD</fullName>
    </alternativeName>
</protein>
<keyword id="KW-0456">Lyase</keyword>
<keyword id="KW-0479">Metal-binding</keyword>
<keyword id="KW-0671">Queuosine biosynthesis</keyword>
<keyword id="KW-1185">Reference proteome</keyword>
<keyword id="KW-0862">Zinc</keyword>
<evidence type="ECO:0000250" key="1"/>
<evidence type="ECO:0000305" key="2"/>
<name>QUED_AQUAE</name>